<gene>
    <name type="ordered locus">MT0918</name>
</gene>
<dbReference type="EMBL" id="AE000516">
    <property type="protein sequence ID" value="AAK45164.1"/>
    <property type="molecule type" value="Genomic_DNA"/>
</dbReference>
<dbReference type="PIR" id="C70782">
    <property type="entry name" value="C70782"/>
</dbReference>
<dbReference type="RefSeq" id="WP_003404660.1">
    <property type="nucleotide sequence ID" value="NZ_KK341227.1"/>
</dbReference>
<dbReference type="SMR" id="P9WKP8"/>
<dbReference type="KEGG" id="mtc:MT0918"/>
<dbReference type="PATRIC" id="fig|83331.31.peg.986"/>
<dbReference type="HOGENOM" id="CLU_004665_7_2_11"/>
<dbReference type="Proteomes" id="UP000001020">
    <property type="component" value="Chromosome"/>
</dbReference>
<dbReference type="GO" id="GO:0005524">
    <property type="term" value="F:ATP binding"/>
    <property type="evidence" value="ECO:0007669"/>
    <property type="project" value="UniProtKB-KW"/>
</dbReference>
<dbReference type="FunFam" id="3.40.50.300:FF:001666">
    <property type="entry name" value="LuxR family transcriptional regulator"/>
    <property type="match status" value="1"/>
</dbReference>
<dbReference type="Gene3D" id="3.40.50.300">
    <property type="entry name" value="P-loop containing nucleotide triphosphate hydrolases"/>
    <property type="match status" value="1"/>
</dbReference>
<dbReference type="InterPro" id="IPR027417">
    <property type="entry name" value="P-loop_NTPase"/>
</dbReference>
<dbReference type="PANTHER" id="PTHR47691:SF3">
    <property type="entry name" value="HTH-TYPE TRANSCRIPTIONAL REGULATOR RV0890C-RELATED"/>
    <property type="match status" value="1"/>
</dbReference>
<dbReference type="PANTHER" id="PTHR47691">
    <property type="entry name" value="REGULATOR-RELATED"/>
    <property type="match status" value="1"/>
</dbReference>
<dbReference type="SUPFAM" id="SSF52540">
    <property type="entry name" value="P-loop containing nucleoside triphosphate hydrolases"/>
    <property type="match status" value="1"/>
</dbReference>
<feature type="chain" id="PRO_0000427616" description="Uncharacterized protein MT0918">
    <location>
        <begin position="1"/>
        <end position="393"/>
    </location>
</feature>
<feature type="binding site" evidence="1">
    <location>
        <begin position="67"/>
        <end position="74"/>
    </location>
    <ligand>
        <name>ATP</name>
        <dbReference type="ChEBI" id="CHEBI:30616"/>
    </ligand>
</feature>
<sequence length="393" mass="42873">MPSRATVQEFSDSYPFCHNGFRPIMMPKIVSVQHSTRRHLTSFVGRKAELNDVRRLLSDKRLVTLTGPDGMGKSRLALQIGAQIAHEFTYGRWDCDLATVTDRDCVSISMLNALGLPVQPGLSAIDTLVGVINDARVLLVLDHCEHLLDACAAIIDSLLRSCPRLTILTTSTEAIGLAGELTWRVPPLSLTNDAIELFVDRARRVRSDFAINADTAVTVGEICRRLDGVPLAIELAAARTDTLSPVEILAGLNDRFRLVAGAAGNAVRPEQTLCATVQWSHALLSGPERALLHRLAVFAGGFDLDGAQAVGANDEDFEGYQTLGRFAELVDKAFVVVENNRGRAGYRLLYSVRQYALEKLSESGEADAVLARYRKHLKQPNQVVRAGSGGVRY</sequence>
<proteinExistence type="predicted"/>
<organism>
    <name type="scientific">Mycobacterium tuberculosis (strain CDC 1551 / Oshkosh)</name>
    <dbReference type="NCBI Taxonomy" id="83331"/>
    <lineage>
        <taxon>Bacteria</taxon>
        <taxon>Bacillati</taxon>
        <taxon>Actinomycetota</taxon>
        <taxon>Actinomycetes</taxon>
        <taxon>Mycobacteriales</taxon>
        <taxon>Mycobacteriaceae</taxon>
        <taxon>Mycobacterium</taxon>
        <taxon>Mycobacterium tuberculosis complex</taxon>
    </lineage>
</organism>
<protein>
    <recommendedName>
        <fullName>Uncharacterized protein MT0918</fullName>
    </recommendedName>
</protein>
<reference key="1">
    <citation type="journal article" date="2002" name="J. Bacteriol.">
        <title>Whole-genome comparison of Mycobacterium tuberculosis clinical and laboratory strains.</title>
        <authorList>
            <person name="Fleischmann R.D."/>
            <person name="Alland D."/>
            <person name="Eisen J.A."/>
            <person name="Carpenter L."/>
            <person name="White O."/>
            <person name="Peterson J.D."/>
            <person name="DeBoy R.T."/>
            <person name="Dodson R.J."/>
            <person name="Gwinn M.L."/>
            <person name="Haft D.H."/>
            <person name="Hickey E.K."/>
            <person name="Kolonay J.F."/>
            <person name="Nelson W.C."/>
            <person name="Umayam L.A."/>
            <person name="Ermolaeva M.D."/>
            <person name="Salzberg S.L."/>
            <person name="Delcher A."/>
            <person name="Utterback T.R."/>
            <person name="Weidman J.F."/>
            <person name="Khouri H.M."/>
            <person name="Gill J."/>
            <person name="Mikula A."/>
            <person name="Bishai W."/>
            <person name="Jacobs W.R. Jr."/>
            <person name="Venter J.C."/>
            <person name="Fraser C.M."/>
        </authorList>
    </citation>
    <scope>NUCLEOTIDE SEQUENCE [LARGE SCALE GENOMIC DNA]</scope>
    <source>
        <strain>CDC 1551 / Oshkosh</strain>
    </source>
</reference>
<name>Y894_MYCTO</name>
<keyword id="KW-0067">ATP-binding</keyword>
<keyword id="KW-0547">Nucleotide-binding</keyword>
<keyword id="KW-1185">Reference proteome</keyword>
<accession>P9WKP8</accession>
<accession>L0T813</accession>
<accession>P64749</accession>
<accession>Q10553</accession>
<evidence type="ECO:0000255" key="1"/>